<name>RL4_NEIM0</name>
<comment type="function">
    <text evidence="1">One of the primary rRNA binding proteins, this protein initially binds near the 5'-end of the 23S rRNA. It is important during the early stages of 50S assembly. It makes multiple contacts with different domains of the 23S rRNA in the assembled 50S subunit and ribosome.</text>
</comment>
<comment type="function">
    <text evidence="1">Forms part of the polypeptide exit tunnel.</text>
</comment>
<comment type="subunit">
    <text evidence="1">Part of the 50S ribosomal subunit.</text>
</comment>
<comment type="similarity">
    <text evidence="1">Belongs to the universal ribosomal protein uL4 family.</text>
</comment>
<gene>
    <name evidence="1" type="primary">rplD</name>
    <name type="ordered locus">NMCC_2004</name>
</gene>
<organism>
    <name type="scientific">Neisseria meningitidis serogroup C (strain 053442)</name>
    <dbReference type="NCBI Taxonomy" id="374833"/>
    <lineage>
        <taxon>Bacteria</taxon>
        <taxon>Pseudomonadati</taxon>
        <taxon>Pseudomonadota</taxon>
        <taxon>Betaproteobacteria</taxon>
        <taxon>Neisseriales</taxon>
        <taxon>Neisseriaceae</taxon>
        <taxon>Neisseria</taxon>
    </lineage>
</organism>
<feature type="chain" id="PRO_1000086527" description="Large ribosomal subunit protein uL4">
    <location>
        <begin position="1"/>
        <end position="206"/>
    </location>
</feature>
<feature type="region of interest" description="Disordered" evidence="2">
    <location>
        <begin position="46"/>
        <end position="95"/>
    </location>
</feature>
<feature type="compositionally biased region" description="Basic residues" evidence="2">
    <location>
        <begin position="59"/>
        <end position="70"/>
    </location>
</feature>
<reference key="1">
    <citation type="journal article" date="2008" name="Genomics">
        <title>Characterization of ST-4821 complex, a unique Neisseria meningitidis clone.</title>
        <authorList>
            <person name="Peng J."/>
            <person name="Yang L."/>
            <person name="Yang F."/>
            <person name="Yang J."/>
            <person name="Yan Y."/>
            <person name="Nie H."/>
            <person name="Zhang X."/>
            <person name="Xiong Z."/>
            <person name="Jiang Y."/>
            <person name="Cheng F."/>
            <person name="Xu X."/>
            <person name="Chen S."/>
            <person name="Sun L."/>
            <person name="Li W."/>
            <person name="Shen Y."/>
            <person name="Shao Z."/>
            <person name="Liang X."/>
            <person name="Xu J."/>
            <person name="Jin Q."/>
        </authorList>
    </citation>
    <scope>NUCLEOTIDE SEQUENCE [LARGE SCALE GENOMIC DNA]</scope>
    <source>
        <strain>053442</strain>
    </source>
</reference>
<dbReference type="EMBL" id="CP000381">
    <property type="protein sequence ID" value="ABX74127.1"/>
    <property type="molecule type" value="Genomic_DNA"/>
</dbReference>
<dbReference type="RefSeq" id="WP_002215402.1">
    <property type="nucleotide sequence ID" value="NC_010120.1"/>
</dbReference>
<dbReference type="SMR" id="A9M3W5"/>
<dbReference type="GeneID" id="93387218"/>
<dbReference type="KEGG" id="nmn:NMCC_2004"/>
<dbReference type="HOGENOM" id="CLU_041575_5_2_4"/>
<dbReference type="Proteomes" id="UP000001177">
    <property type="component" value="Chromosome"/>
</dbReference>
<dbReference type="GO" id="GO:1990904">
    <property type="term" value="C:ribonucleoprotein complex"/>
    <property type="evidence" value="ECO:0007669"/>
    <property type="project" value="UniProtKB-KW"/>
</dbReference>
<dbReference type="GO" id="GO:0005840">
    <property type="term" value="C:ribosome"/>
    <property type="evidence" value="ECO:0007669"/>
    <property type="project" value="UniProtKB-KW"/>
</dbReference>
<dbReference type="GO" id="GO:0019843">
    <property type="term" value="F:rRNA binding"/>
    <property type="evidence" value="ECO:0007669"/>
    <property type="project" value="UniProtKB-UniRule"/>
</dbReference>
<dbReference type="GO" id="GO:0003735">
    <property type="term" value="F:structural constituent of ribosome"/>
    <property type="evidence" value="ECO:0007669"/>
    <property type="project" value="InterPro"/>
</dbReference>
<dbReference type="GO" id="GO:0006412">
    <property type="term" value="P:translation"/>
    <property type="evidence" value="ECO:0007669"/>
    <property type="project" value="UniProtKB-UniRule"/>
</dbReference>
<dbReference type="FunFam" id="3.40.1370.10:FF:000010">
    <property type="entry name" value="50S ribosomal protein L4"/>
    <property type="match status" value="1"/>
</dbReference>
<dbReference type="Gene3D" id="3.40.1370.10">
    <property type="match status" value="1"/>
</dbReference>
<dbReference type="HAMAP" id="MF_01328_B">
    <property type="entry name" value="Ribosomal_uL4_B"/>
    <property type="match status" value="1"/>
</dbReference>
<dbReference type="InterPro" id="IPR002136">
    <property type="entry name" value="Ribosomal_uL4"/>
</dbReference>
<dbReference type="InterPro" id="IPR013005">
    <property type="entry name" value="Ribosomal_uL4-like"/>
</dbReference>
<dbReference type="InterPro" id="IPR023574">
    <property type="entry name" value="Ribosomal_uL4_dom_sf"/>
</dbReference>
<dbReference type="NCBIfam" id="TIGR03953">
    <property type="entry name" value="rplD_bact"/>
    <property type="match status" value="1"/>
</dbReference>
<dbReference type="PANTHER" id="PTHR10746">
    <property type="entry name" value="50S RIBOSOMAL PROTEIN L4"/>
    <property type="match status" value="1"/>
</dbReference>
<dbReference type="PANTHER" id="PTHR10746:SF6">
    <property type="entry name" value="LARGE RIBOSOMAL SUBUNIT PROTEIN UL4M"/>
    <property type="match status" value="1"/>
</dbReference>
<dbReference type="Pfam" id="PF00573">
    <property type="entry name" value="Ribosomal_L4"/>
    <property type="match status" value="1"/>
</dbReference>
<dbReference type="SUPFAM" id="SSF52166">
    <property type="entry name" value="Ribosomal protein L4"/>
    <property type="match status" value="1"/>
</dbReference>
<keyword id="KW-0687">Ribonucleoprotein</keyword>
<keyword id="KW-0689">Ribosomal protein</keyword>
<keyword id="KW-0694">RNA-binding</keyword>
<keyword id="KW-0699">rRNA-binding</keyword>
<accession>A9M3W5</accession>
<evidence type="ECO:0000255" key="1">
    <source>
        <dbReference type="HAMAP-Rule" id="MF_01328"/>
    </source>
</evidence>
<evidence type="ECO:0000256" key="2">
    <source>
        <dbReference type="SAM" id="MobiDB-lite"/>
    </source>
</evidence>
<evidence type="ECO:0000305" key="3"/>
<sequence length="206" mass="23263">MELKVIDAKGQVSGSLSVSDALFAREYNEALVHQLVNAYLANARSGNRAQKTRAEVKHSTKKPWRQKGTGRARSGMTSSPLWRKGGRAFPNKPDENFTQKVNRKMYRAGMATILSQLTRDERLFAIEALTAETPKTKVFAEQVKNLGLEQVLFVTKQLDENVYLASRNLPNVLVLEAQQVDPYSLLRYKKVIITKDAVAQLEEQWV</sequence>
<proteinExistence type="inferred from homology"/>
<protein>
    <recommendedName>
        <fullName evidence="1">Large ribosomal subunit protein uL4</fullName>
    </recommendedName>
    <alternativeName>
        <fullName evidence="3">50S ribosomal protein L4</fullName>
    </alternativeName>
</protein>